<proteinExistence type="inferred from homology"/>
<comment type="function">
    <text evidence="1">Endoribonuclease that initiates mRNA decay.</text>
</comment>
<comment type="subcellular location">
    <subcellularLocation>
        <location evidence="1">Cell membrane</location>
        <topology evidence="1">Single-pass membrane protein</topology>
    </subcellularLocation>
</comment>
<comment type="similarity">
    <text evidence="1">Belongs to the RNase Y family.</text>
</comment>
<comment type="sequence caution" evidence="3">
    <conflict type="erroneous initiation">
        <sequence resource="EMBL-CDS" id="EAU00478"/>
    </conflict>
</comment>
<dbReference type="EC" id="3.1.-.-" evidence="1"/>
<dbReference type="EMBL" id="CP000767">
    <property type="protein sequence ID" value="EAU00478.2"/>
    <property type="status" value="ALT_INIT"/>
    <property type="molecule type" value="Genomic_DNA"/>
</dbReference>
<dbReference type="RefSeq" id="WP_034966560.1">
    <property type="nucleotide sequence ID" value="NC_009715.2"/>
</dbReference>
<dbReference type="SMR" id="A7GY23"/>
<dbReference type="STRING" id="360105.CCV52592_1398"/>
<dbReference type="KEGG" id="ccv:CCV52592_1398"/>
<dbReference type="HOGENOM" id="CLU_028328_1_0_7"/>
<dbReference type="OrthoDB" id="9803205at2"/>
<dbReference type="Proteomes" id="UP000006380">
    <property type="component" value="Chromosome"/>
</dbReference>
<dbReference type="GO" id="GO:0005886">
    <property type="term" value="C:plasma membrane"/>
    <property type="evidence" value="ECO:0007669"/>
    <property type="project" value="UniProtKB-SubCell"/>
</dbReference>
<dbReference type="GO" id="GO:0003723">
    <property type="term" value="F:RNA binding"/>
    <property type="evidence" value="ECO:0007669"/>
    <property type="project" value="UniProtKB-UniRule"/>
</dbReference>
<dbReference type="GO" id="GO:0004521">
    <property type="term" value="F:RNA endonuclease activity"/>
    <property type="evidence" value="ECO:0007669"/>
    <property type="project" value="UniProtKB-UniRule"/>
</dbReference>
<dbReference type="GO" id="GO:0006402">
    <property type="term" value="P:mRNA catabolic process"/>
    <property type="evidence" value="ECO:0007669"/>
    <property type="project" value="UniProtKB-UniRule"/>
</dbReference>
<dbReference type="CDD" id="cd00077">
    <property type="entry name" value="HDc"/>
    <property type="match status" value="1"/>
</dbReference>
<dbReference type="CDD" id="cd22431">
    <property type="entry name" value="KH-I_RNaseY"/>
    <property type="match status" value="1"/>
</dbReference>
<dbReference type="Gene3D" id="1.10.3210.10">
    <property type="entry name" value="Hypothetical protein af1432"/>
    <property type="match status" value="1"/>
</dbReference>
<dbReference type="Gene3D" id="3.30.1370.10">
    <property type="entry name" value="K Homology domain, type 1"/>
    <property type="match status" value="1"/>
</dbReference>
<dbReference type="HAMAP" id="MF_00335">
    <property type="entry name" value="RNase_Y"/>
    <property type="match status" value="1"/>
</dbReference>
<dbReference type="InterPro" id="IPR003607">
    <property type="entry name" value="HD/PDEase_dom"/>
</dbReference>
<dbReference type="InterPro" id="IPR006674">
    <property type="entry name" value="HD_domain"/>
</dbReference>
<dbReference type="InterPro" id="IPR006675">
    <property type="entry name" value="HDIG_dom"/>
</dbReference>
<dbReference type="InterPro" id="IPR036612">
    <property type="entry name" value="KH_dom_type_1_sf"/>
</dbReference>
<dbReference type="InterPro" id="IPR017705">
    <property type="entry name" value="Ribonuclease_Y"/>
</dbReference>
<dbReference type="InterPro" id="IPR022711">
    <property type="entry name" value="RNase_Y_N"/>
</dbReference>
<dbReference type="NCBIfam" id="TIGR00277">
    <property type="entry name" value="HDIG"/>
    <property type="match status" value="1"/>
</dbReference>
<dbReference type="NCBIfam" id="TIGR03319">
    <property type="entry name" value="RNase_Y"/>
    <property type="match status" value="1"/>
</dbReference>
<dbReference type="PANTHER" id="PTHR12826">
    <property type="entry name" value="RIBONUCLEASE Y"/>
    <property type="match status" value="1"/>
</dbReference>
<dbReference type="PANTHER" id="PTHR12826:SF15">
    <property type="entry name" value="RIBONUCLEASE Y"/>
    <property type="match status" value="1"/>
</dbReference>
<dbReference type="Pfam" id="PF01966">
    <property type="entry name" value="HD"/>
    <property type="match status" value="1"/>
</dbReference>
<dbReference type="Pfam" id="PF12072">
    <property type="entry name" value="RNase_Y_N"/>
    <property type="match status" value="1"/>
</dbReference>
<dbReference type="SMART" id="SM00471">
    <property type="entry name" value="HDc"/>
    <property type="match status" value="1"/>
</dbReference>
<dbReference type="SUPFAM" id="SSF54791">
    <property type="entry name" value="Eukaryotic type KH-domain (KH-domain type I)"/>
    <property type="match status" value="1"/>
</dbReference>
<dbReference type="SUPFAM" id="SSF109604">
    <property type="entry name" value="HD-domain/PDEase-like"/>
    <property type="match status" value="1"/>
</dbReference>
<dbReference type="PROSITE" id="PS51831">
    <property type="entry name" value="HD"/>
    <property type="match status" value="1"/>
</dbReference>
<reference key="1">
    <citation type="submission" date="2007-07" db="EMBL/GenBank/DDBJ databases">
        <title>Genome sequence of Campylobacter curvus 525.92 isolated from human feces.</title>
        <authorList>
            <person name="Fouts D.E."/>
            <person name="Mongodin E.F."/>
            <person name="Puiu D."/>
            <person name="Sebastian Y."/>
            <person name="Miller W.G."/>
            <person name="Mandrell R.E."/>
            <person name="Lastovica A.J."/>
            <person name="Nelson K.E."/>
        </authorList>
    </citation>
    <scope>NUCLEOTIDE SEQUENCE [LARGE SCALE GENOMIC DNA]</scope>
    <source>
        <strain>525.92</strain>
    </source>
</reference>
<gene>
    <name evidence="1" type="primary">rny</name>
    <name type="ordered locus">Ccur92_08110</name>
    <name type="ORF">CCV52592_1398</name>
</gene>
<organism>
    <name type="scientific">Campylobacter curvus (strain 525.92)</name>
    <dbReference type="NCBI Taxonomy" id="360105"/>
    <lineage>
        <taxon>Bacteria</taxon>
        <taxon>Pseudomonadati</taxon>
        <taxon>Campylobacterota</taxon>
        <taxon>Epsilonproteobacteria</taxon>
        <taxon>Campylobacterales</taxon>
        <taxon>Campylobacteraceae</taxon>
        <taxon>Campylobacter</taxon>
    </lineage>
</organism>
<sequence>MIEVLIGLGAGVAGVGAGYLYAKKINDANYNIFLEQAKAKAKAIEYEAELTLKNSKISVQEAEFEAKKRYDDKTTKLQKEYSQKFDELNKKEQILLNEQELLNENKELFEKDRNEAKLTYEEGLNLKATYQSKVQEALKVLEHAAGLTEDEAREVVLKKVEEKSRADIAHIVRKHEEEAKREAKKRVNYILAQATSRFAGEFAAERLINVVNIKNDELKGRIIGKEGRNIKTLEMVLGVDIIIDDTPHAIILSSFNLYRRAIATRVIELLVEDGRIQPARIEDLHKKVTEEFEQSIQEEGENIVIDLGLSKIHPEITKLIGKLKFRASYGQNALAHSLEVAHLAGIIAAETGGDEKLAKRAGLLHDIGKALTHEFEGSHVDLGAEICKRYKEHPVVINAIYAHHGHEEATSIESAAVCAADCLSAARPGARREVLESFLKRVEEVENIAKSKDGIKQAYAINAGREIRVIANAKLINDDEAVLVAKEIAKEIEEKVQYPGEIKVSVIRETRAVDYAK</sequence>
<keyword id="KW-1003">Cell membrane</keyword>
<keyword id="KW-0255">Endonuclease</keyword>
<keyword id="KW-0378">Hydrolase</keyword>
<keyword id="KW-0472">Membrane</keyword>
<keyword id="KW-0540">Nuclease</keyword>
<keyword id="KW-1185">Reference proteome</keyword>
<keyword id="KW-0694">RNA-binding</keyword>
<keyword id="KW-0812">Transmembrane</keyword>
<keyword id="KW-1133">Transmembrane helix</keyword>
<feature type="chain" id="PRO_0000344833" description="Ribonuclease Y">
    <location>
        <begin position="1"/>
        <end position="517"/>
    </location>
</feature>
<feature type="transmembrane region" description="Helical" evidence="1">
    <location>
        <begin position="1"/>
        <end position="21"/>
    </location>
</feature>
<feature type="domain" description="KH" evidence="1">
    <location>
        <begin position="207"/>
        <end position="273"/>
    </location>
</feature>
<feature type="domain" description="HD" evidence="2">
    <location>
        <begin position="333"/>
        <end position="426"/>
    </location>
</feature>
<name>RNY_CAMC5</name>
<accession>A7GY23</accession>
<evidence type="ECO:0000255" key="1">
    <source>
        <dbReference type="HAMAP-Rule" id="MF_00335"/>
    </source>
</evidence>
<evidence type="ECO:0000255" key="2">
    <source>
        <dbReference type="PROSITE-ProRule" id="PRU01175"/>
    </source>
</evidence>
<evidence type="ECO:0000305" key="3"/>
<protein>
    <recommendedName>
        <fullName evidence="1">Ribonuclease Y</fullName>
        <shortName evidence="1">RNase Y</shortName>
        <ecNumber evidence="1">3.1.-.-</ecNumber>
    </recommendedName>
</protein>